<sequence length="138" mass="14589">MGKKVLAVVKLALPAGKATPAPPVGPALGQYGVNLVMFTKEYNAKTADQIGLIIPAQITIYEDKSYSFILKTPPASVLLKRAAQIEKGSNNGTIVASITQEQLQQIALTKLPDLNTKDVKKAMSIISGTAANMGIQIL</sequence>
<proteinExistence type="inferred from homology"/>
<dbReference type="EMBL" id="AB002583">
    <property type="protein sequence ID" value="BAC76179.1"/>
    <property type="molecule type" value="Genomic_DNA"/>
</dbReference>
<dbReference type="RefSeq" id="NP_849017.1">
    <property type="nucleotide sequence ID" value="NC_004799.1"/>
</dbReference>
<dbReference type="SMR" id="Q85G12"/>
<dbReference type="STRING" id="280699.Q85G12"/>
<dbReference type="EnsemblPlants" id="CMV102CT">
    <property type="protein sequence ID" value="CMV102CT"/>
    <property type="gene ID" value="CMV102C"/>
</dbReference>
<dbReference type="GeneID" id="844968"/>
<dbReference type="Gramene" id="CMV102CT">
    <property type="protein sequence ID" value="CMV102CT"/>
    <property type="gene ID" value="CMV102C"/>
</dbReference>
<dbReference type="KEGG" id="cme:CymeCp085"/>
<dbReference type="eggNOG" id="KOG3257">
    <property type="taxonomic scope" value="Eukaryota"/>
</dbReference>
<dbReference type="HOGENOM" id="CLU_074237_2_2_1"/>
<dbReference type="Proteomes" id="UP000007014">
    <property type="component" value="Chloroplast"/>
</dbReference>
<dbReference type="GO" id="GO:0009507">
    <property type="term" value="C:chloroplast"/>
    <property type="evidence" value="ECO:0007669"/>
    <property type="project" value="UniProtKB-SubCell"/>
</dbReference>
<dbReference type="GO" id="GO:0022625">
    <property type="term" value="C:cytosolic large ribosomal subunit"/>
    <property type="evidence" value="ECO:0007669"/>
    <property type="project" value="TreeGrafter"/>
</dbReference>
<dbReference type="GO" id="GO:0070180">
    <property type="term" value="F:large ribosomal subunit rRNA binding"/>
    <property type="evidence" value="ECO:0007669"/>
    <property type="project" value="UniProtKB-UniRule"/>
</dbReference>
<dbReference type="GO" id="GO:0003735">
    <property type="term" value="F:structural constituent of ribosome"/>
    <property type="evidence" value="ECO:0007669"/>
    <property type="project" value="InterPro"/>
</dbReference>
<dbReference type="GO" id="GO:0006412">
    <property type="term" value="P:translation"/>
    <property type="evidence" value="ECO:0007669"/>
    <property type="project" value="UniProtKB-UniRule"/>
</dbReference>
<dbReference type="CDD" id="cd00349">
    <property type="entry name" value="Ribosomal_L11"/>
    <property type="match status" value="1"/>
</dbReference>
<dbReference type="FunFam" id="3.30.1550.10:FF:000005">
    <property type="entry name" value="50S ribosomal protein L11"/>
    <property type="match status" value="1"/>
</dbReference>
<dbReference type="Gene3D" id="1.10.10.250">
    <property type="entry name" value="Ribosomal protein L11, C-terminal domain"/>
    <property type="match status" value="1"/>
</dbReference>
<dbReference type="Gene3D" id="3.30.1550.10">
    <property type="entry name" value="Ribosomal protein L11/L12, N-terminal domain"/>
    <property type="match status" value="1"/>
</dbReference>
<dbReference type="HAMAP" id="MF_00736">
    <property type="entry name" value="Ribosomal_uL11"/>
    <property type="match status" value="1"/>
</dbReference>
<dbReference type="InterPro" id="IPR000911">
    <property type="entry name" value="Ribosomal_uL11"/>
</dbReference>
<dbReference type="InterPro" id="IPR006519">
    <property type="entry name" value="Ribosomal_uL11_bac-typ"/>
</dbReference>
<dbReference type="InterPro" id="IPR020783">
    <property type="entry name" value="Ribosomal_uL11_C"/>
</dbReference>
<dbReference type="InterPro" id="IPR036769">
    <property type="entry name" value="Ribosomal_uL11_C_sf"/>
</dbReference>
<dbReference type="InterPro" id="IPR020784">
    <property type="entry name" value="Ribosomal_uL11_N"/>
</dbReference>
<dbReference type="InterPro" id="IPR036796">
    <property type="entry name" value="Ribosomal_uL11_N_sf"/>
</dbReference>
<dbReference type="NCBIfam" id="TIGR01632">
    <property type="entry name" value="L11_bact"/>
    <property type="match status" value="1"/>
</dbReference>
<dbReference type="PANTHER" id="PTHR11661">
    <property type="entry name" value="60S RIBOSOMAL PROTEIN L12"/>
    <property type="match status" value="1"/>
</dbReference>
<dbReference type="PANTHER" id="PTHR11661:SF1">
    <property type="entry name" value="LARGE RIBOSOMAL SUBUNIT PROTEIN UL11M"/>
    <property type="match status" value="1"/>
</dbReference>
<dbReference type="Pfam" id="PF00298">
    <property type="entry name" value="Ribosomal_L11"/>
    <property type="match status" value="1"/>
</dbReference>
<dbReference type="Pfam" id="PF03946">
    <property type="entry name" value="Ribosomal_L11_N"/>
    <property type="match status" value="1"/>
</dbReference>
<dbReference type="SMART" id="SM00649">
    <property type="entry name" value="RL11"/>
    <property type="match status" value="1"/>
</dbReference>
<dbReference type="SUPFAM" id="SSF54747">
    <property type="entry name" value="Ribosomal L11/L12e N-terminal domain"/>
    <property type="match status" value="1"/>
</dbReference>
<dbReference type="SUPFAM" id="SSF46906">
    <property type="entry name" value="Ribosomal protein L11, C-terminal domain"/>
    <property type="match status" value="1"/>
</dbReference>
<name>RK11_CYAM1</name>
<evidence type="ECO:0000255" key="1">
    <source>
        <dbReference type="HAMAP-Rule" id="MF_00736"/>
    </source>
</evidence>
<evidence type="ECO:0000305" key="2"/>
<feature type="chain" id="PRO_0000104423" description="Large ribosomal subunit protein uL11c">
    <location>
        <begin position="1"/>
        <end position="138"/>
    </location>
</feature>
<keyword id="KW-0150">Chloroplast</keyword>
<keyword id="KW-0934">Plastid</keyword>
<keyword id="KW-1185">Reference proteome</keyword>
<keyword id="KW-0687">Ribonucleoprotein</keyword>
<keyword id="KW-0689">Ribosomal protein</keyword>
<keyword id="KW-0694">RNA-binding</keyword>
<keyword id="KW-0699">rRNA-binding</keyword>
<reference key="1">
    <citation type="journal article" date="2003" name="DNA Res.">
        <title>Complete sequence and analysis of the plastid genome of the unicellular red alga Cyanidioschyzon merolae.</title>
        <authorList>
            <person name="Ohta N."/>
            <person name="Matsuzaki M."/>
            <person name="Misumi O."/>
            <person name="Miyagishima S.-Y."/>
            <person name="Nozaki H."/>
            <person name="Tanaka K."/>
            <person name="Shin-i T."/>
            <person name="Kohara Y."/>
            <person name="Kuroiwa T."/>
        </authorList>
    </citation>
    <scope>NUCLEOTIDE SEQUENCE [LARGE SCALE GENOMIC DNA]</scope>
    <source>
        <strain>NIES-3377 / 10D</strain>
    </source>
</reference>
<gene>
    <name evidence="1" type="primary">rpl11</name>
</gene>
<organism>
    <name type="scientific">Cyanidioschyzon merolae (strain NIES-3377 / 10D)</name>
    <name type="common">Unicellular red alga</name>
    <dbReference type="NCBI Taxonomy" id="280699"/>
    <lineage>
        <taxon>Eukaryota</taxon>
        <taxon>Rhodophyta</taxon>
        <taxon>Bangiophyceae</taxon>
        <taxon>Cyanidiales</taxon>
        <taxon>Cyanidiaceae</taxon>
        <taxon>Cyanidioschyzon</taxon>
    </lineage>
</organism>
<geneLocation type="chloroplast"/>
<accession>Q85G12</accession>
<comment type="function">
    <text evidence="1">Forms part of the ribosomal stalk which helps the ribosome interact with GTP-bound translation factors.</text>
</comment>
<comment type="subunit">
    <text evidence="1">Part of the ribosomal stalk of the 50S ribosomal subunit. Interacts with L10 and the large rRNA to form the base of the stalk. L10 forms an elongated spine to which L12 dimers bind in a sequential fashion forming a multimeric L10(L12)X complex.</text>
</comment>
<comment type="subcellular location">
    <subcellularLocation>
        <location>Plastid</location>
        <location>Chloroplast</location>
    </subcellularLocation>
</comment>
<comment type="similarity">
    <text evidence="1">Belongs to the universal ribosomal protein uL11 family.</text>
</comment>
<protein>
    <recommendedName>
        <fullName evidence="1">Large ribosomal subunit protein uL11c</fullName>
    </recommendedName>
    <alternativeName>
        <fullName evidence="2">50S ribosomal protein L11, chloroplastic</fullName>
    </alternativeName>
</protein>